<feature type="chain" id="PRO_0000272414" description="Phosphate import ATP-binding protein PstB">
    <location>
        <begin position="1"/>
        <end position="297"/>
    </location>
</feature>
<feature type="domain" description="ABC transporter" evidence="1">
    <location>
        <begin position="50"/>
        <end position="292"/>
    </location>
</feature>
<feature type="binding site" evidence="1">
    <location>
        <begin position="82"/>
        <end position="89"/>
    </location>
    <ligand>
        <name>ATP</name>
        <dbReference type="ChEBI" id="CHEBI:30616"/>
    </ligand>
</feature>
<reference key="1">
    <citation type="journal article" date="2006" name="Nat. Biotechnol.">
        <title>Genome sequence of the ubiquitous hydrocarbon-degrading marine bacterium Alcanivorax borkumensis.</title>
        <authorList>
            <person name="Schneiker S."/>
            <person name="Martins dos Santos V.A.P."/>
            <person name="Bartels D."/>
            <person name="Bekel T."/>
            <person name="Brecht M."/>
            <person name="Buhrmester J."/>
            <person name="Chernikova T.N."/>
            <person name="Denaro R."/>
            <person name="Ferrer M."/>
            <person name="Gertler C."/>
            <person name="Goesmann A."/>
            <person name="Golyshina O.V."/>
            <person name="Kaminski F."/>
            <person name="Khachane A.N."/>
            <person name="Lang S."/>
            <person name="Linke B."/>
            <person name="McHardy A.C."/>
            <person name="Meyer F."/>
            <person name="Nechitaylo T."/>
            <person name="Puehler A."/>
            <person name="Regenhardt D."/>
            <person name="Rupp O."/>
            <person name="Sabirova J.S."/>
            <person name="Selbitschka W."/>
            <person name="Yakimov M.M."/>
            <person name="Timmis K.N."/>
            <person name="Vorhoelter F.-J."/>
            <person name="Weidner S."/>
            <person name="Kaiser O."/>
            <person name="Golyshin P.N."/>
        </authorList>
    </citation>
    <scope>NUCLEOTIDE SEQUENCE [LARGE SCALE GENOMIC DNA]</scope>
    <source>
        <strain>ATCC 700651 / DSM 11573 / NCIMB 13689 / SK2</strain>
    </source>
</reference>
<keyword id="KW-0067">ATP-binding</keyword>
<keyword id="KW-0997">Cell inner membrane</keyword>
<keyword id="KW-1003">Cell membrane</keyword>
<keyword id="KW-0472">Membrane</keyword>
<keyword id="KW-0547">Nucleotide-binding</keyword>
<keyword id="KW-0592">Phosphate transport</keyword>
<keyword id="KW-1185">Reference proteome</keyword>
<keyword id="KW-1278">Translocase</keyword>
<keyword id="KW-0813">Transport</keyword>
<dbReference type="EC" id="7.3.2.1" evidence="1"/>
<dbReference type="EMBL" id="AM286690">
    <property type="protein sequence ID" value="CAL18130.1"/>
    <property type="molecule type" value="Genomic_DNA"/>
</dbReference>
<dbReference type="RefSeq" id="WP_011589953.1">
    <property type="nucleotide sequence ID" value="NC_008260.1"/>
</dbReference>
<dbReference type="SMR" id="Q0VL18"/>
<dbReference type="STRING" id="393595.ABO_2682"/>
<dbReference type="KEGG" id="abo:ABO_2682"/>
<dbReference type="eggNOG" id="COG1117">
    <property type="taxonomic scope" value="Bacteria"/>
</dbReference>
<dbReference type="HOGENOM" id="CLU_000604_1_22_6"/>
<dbReference type="OrthoDB" id="9802264at2"/>
<dbReference type="Proteomes" id="UP000008871">
    <property type="component" value="Chromosome"/>
</dbReference>
<dbReference type="GO" id="GO:0005886">
    <property type="term" value="C:plasma membrane"/>
    <property type="evidence" value="ECO:0007669"/>
    <property type="project" value="UniProtKB-SubCell"/>
</dbReference>
<dbReference type="GO" id="GO:0005524">
    <property type="term" value="F:ATP binding"/>
    <property type="evidence" value="ECO:0007669"/>
    <property type="project" value="UniProtKB-KW"/>
</dbReference>
<dbReference type="GO" id="GO:0016887">
    <property type="term" value="F:ATP hydrolysis activity"/>
    <property type="evidence" value="ECO:0007669"/>
    <property type="project" value="InterPro"/>
</dbReference>
<dbReference type="GO" id="GO:0015415">
    <property type="term" value="F:ATPase-coupled phosphate ion transmembrane transporter activity"/>
    <property type="evidence" value="ECO:0007669"/>
    <property type="project" value="UniProtKB-EC"/>
</dbReference>
<dbReference type="GO" id="GO:0035435">
    <property type="term" value="P:phosphate ion transmembrane transport"/>
    <property type="evidence" value="ECO:0007669"/>
    <property type="project" value="InterPro"/>
</dbReference>
<dbReference type="CDD" id="cd03260">
    <property type="entry name" value="ABC_PstB_phosphate_transporter"/>
    <property type="match status" value="1"/>
</dbReference>
<dbReference type="Gene3D" id="3.40.50.300">
    <property type="entry name" value="P-loop containing nucleotide triphosphate hydrolases"/>
    <property type="match status" value="1"/>
</dbReference>
<dbReference type="InterPro" id="IPR003593">
    <property type="entry name" value="AAA+_ATPase"/>
</dbReference>
<dbReference type="InterPro" id="IPR003439">
    <property type="entry name" value="ABC_transporter-like_ATP-bd"/>
</dbReference>
<dbReference type="InterPro" id="IPR017871">
    <property type="entry name" value="ABC_transporter-like_CS"/>
</dbReference>
<dbReference type="InterPro" id="IPR027417">
    <property type="entry name" value="P-loop_NTPase"/>
</dbReference>
<dbReference type="InterPro" id="IPR005670">
    <property type="entry name" value="PstB-like"/>
</dbReference>
<dbReference type="NCBIfam" id="TIGR00972">
    <property type="entry name" value="3a0107s01c2"/>
    <property type="match status" value="1"/>
</dbReference>
<dbReference type="PANTHER" id="PTHR43423">
    <property type="entry name" value="ABC TRANSPORTER I FAMILY MEMBER 17"/>
    <property type="match status" value="1"/>
</dbReference>
<dbReference type="PANTHER" id="PTHR43423:SF1">
    <property type="entry name" value="ABC TRANSPORTER I FAMILY MEMBER 17"/>
    <property type="match status" value="1"/>
</dbReference>
<dbReference type="Pfam" id="PF00005">
    <property type="entry name" value="ABC_tran"/>
    <property type="match status" value="1"/>
</dbReference>
<dbReference type="SMART" id="SM00382">
    <property type="entry name" value="AAA"/>
    <property type="match status" value="1"/>
</dbReference>
<dbReference type="SUPFAM" id="SSF52540">
    <property type="entry name" value="P-loop containing nucleoside triphosphate hydrolases"/>
    <property type="match status" value="1"/>
</dbReference>
<dbReference type="PROSITE" id="PS00211">
    <property type="entry name" value="ABC_TRANSPORTER_1"/>
    <property type="match status" value="1"/>
</dbReference>
<dbReference type="PROSITE" id="PS50893">
    <property type="entry name" value="ABC_TRANSPORTER_2"/>
    <property type="match status" value="1"/>
</dbReference>
<dbReference type="PROSITE" id="PS51238">
    <property type="entry name" value="PSTB"/>
    <property type="match status" value="1"/>
</dbReference>
<proteinExistence type="inferred from homology"/>
<name>PSTB_ALCBS</name>
<organism>
    <name type="scientific">Alcanivorax borkumensis (strain ATCC 700651 / DSM 11573 / NCIMB 13689 / SK2)</name>
    <dbReference type="NCBI Taxonomy" id="393595"/>
    <lineage>
        <taxon>Bacteria</taxon>
        <taxon>Pseudomonadati</taxon>
        <taxon>Pseudomonadota</taxon>
        <taxon>Gammaproteobacteria</taxon>
        <taxon>Oceanospirillales</taxon>
        <taxon>Alcanivoracaceae</taxon>
        <taxon>Alcanivorax</taxon>
    </lineage>
</organism>
<evidence type="ECO:0000255" key="1">
    <source>
        <dbReference type="HAMAP-Rule" id="MF_01702"/>
    </source>
</evidence>
<comment type="function">
    <text evidence="1">Part of the ABC transporter complex PstSACB involved in phosphate import. Responsible for energy coupling to the transport system.</text>
</comment>
<comment type="catalytic activity">
    <reaction evidence="1">
        <text>phosphate(out) + ATP + H2O = ADP + 2 phosphate(in) + H(+)</text>
        <dbReference type="Rhea" id="RHEA:24440"/>
        <dbReference type="ChEBI" id="CHEBI:15377"/>
        <dbReference type="ChEBI" id="CHEBI:15378"/>
        <dbReference type="ChEBI" id="CHEBI:30616"/>
        <dbReference type="ChEBI" id="CHEBI:43474"/>
        <dbReference type="ChEBI" id="CHEBI:456216"/>
        <dbReference type="EC" id="7.3.2.1"/>
    </reaction>
</comment>
<comment type="subunit">
    <text evidence="1">The complex is composed of two ATP-binding proteins (PstB), two transmembrane proteins (PstC and PstA) and a solute-binding protein (PstS).</text>
</comment>
<comment type="subcellular location">
    <subcellularLocation>
        <location evidence="1">Cell inner membrane</location>
        <topology evidence="1">Peripheral membrane protein</topology>
    </subcellularLocation>
</comment>
<comment type="similarity">
    <text evidence="1">Belongs to the ABC transporter superfamily. Phosphate importer (TC 3.A.1.7) family.</text>
</comment>
<accession>Q0VL18</accession>
<sequence>METAQQLDKPALDTNDAARDKAINEQVTMTQDTPYPDQTVGNPFVDDPKMRLRDVEVFYDDNQAIHGVSLDIGKNEVVSLIGPSGCGKSTFLRCLNRMNDTIDICKVKGSLHLESQDLYDPKLDVVELRARVGMVFQKPNPFPKSIYDNVAYGPRIHGLANKKYDLDEIVETSLRKAGLWEEVKDRLHAPGTGLSGGQQQRLCIARTIAVSPEVVLMDEPCSALDPIATAKIEELISELSESYTIAIVTHSMQQAARVSSRTAYFHLGRLVEMNDTETVFTKPEHDLTEAYITGRFG</sequence>
<protein>
    <recommendedName>
        <fullName evidence="1">Phosphate import ATP-binding protein PstB</fullName>
        <ecNumber evidence="1">7.3.2.1</ecNumber>
    </recommendedName>
    <alternativeName>
        <fullName evidence="1">ABC phosphate transporter</fullName>
    </alternativeName>
    <alternativeName>
        <fullName evidence="1">Phosphate-transporting ATPase</fullName>
    </alternativeName>
</protein>
<gene>
    <name evidence="1" type="primary">pstB</name>
    <name type="ordered locus">ABO_2682</name>
</gene>